<proteinExistence type="inferred from homology"/>
<organism>
    <name type="scientific">Bacillus anthracis</name>
    <dbReference type="NCBI Taxonomy" id="1392"/>
    <lineage>
        <taxon>Bacteria</taxon>
        <taxon>Bacillati</taxon>
        <taxon>Bacillota</taxon>
        <taxon>Bacilli</taxon>
        <taxon>Bacillales</taxon>
        <taxon>Bacillaceae</taxon>
        <taxon>Bacillus</taxon>
        <taxon>Bacillus cereus group</taxon>
    </lineage>
</organism>
<dbReference type="EC" id="2.5.1.-" evidence="1"/>
<dbReference type="EMBL" id="AE016879">
    <property type="protein sequence ID" value="AAP27690.1"/>
    <property type="molecule type" value="Genomic_DNA"/>
</dbReference>
<dbReference type="EMBL" id="AE017334">
    <property type="protein sequence ID" value="AAT33075.2"/>
    <property type="molecule type" value="Genomic_DNA"/>
</dbReference>
<dbReference type="EMBL" id="AE017225">
    <property type="protein sequence ID" value="AAT55976.1"/>
    <property type="molecule type" value="Genomic_DNA"/>
</dbReference>
<dbReference type="RefSeq" id="NP_846204.1">
    <property type="nucleotide sequence ID" value="NC_003997.3"/>
</dbReference>
<dbReference type="RefSeq" id="WP_000971303.1">
    <property type="nucleotide sequence ID" value="NZ_WXXJ01000026.1"/>
</dbReference>
<dbReference type="RefSeq" id="YP_029925.1">
    <property type="nucleotide sequence ID" value="NC_005945.1"/>
</dbReference>
<dbReference type="SMR" id="Q81WL2"/>
<dbReference type="STRING" id="261594.GBAA_3961"/>
<dbReference type="DNASU" id="1086839"/>
<dbReference type="GeneID" id="45023651"/>
<dbReference type="KEGG" id="ban:BA_3961"/>
<dbReference type="KEGG" id="bar:GBAA_3961"/>
<dbReference type="KEGG" id="bat:BAS3674"/>
<dbReference type="PATRIC" id="fig|198094.11.peg.3931"/>
<dbReference type="eggNOG" id="COG0020">
    <property type="taxonomic scope" value="Bacteria"/>
</dbReference>
<dbReference type="HOGENOM" id="CLU_038505_1_1_9"/>
<dbReference type="OMA" id="FDRRDLW"/>
<dbReference type="OrthoDB" id="4191603at2"/>
<dbReference type="Proteomes" id="UP000000427">
    <property type="component" value="Chromosome"/>
</dbReference>
<dbReference type="Proteomes" id="UP000000594">
    <property type="component" value="Chromosome"/>
</dbReference>
<dbReference type="GO" id="GO:0005829">
    <property type="term" value="C:cytosol"/>
    <property type="evidence" value="ECO:0007669"/>
    <property type="project" value="TreeGrafter"/>
</dbReference>
<dbReference type="GO" id="GO:0008834">
    <property type="term" value="F:ditrans,polycis-undecaprenyl-diphosphate synthase [(2E,6E)-farnesyl-diphosphate specific] activity"/>
    <property type="evidence" value="ECO:0007669"/>
    <property type="project" value="TreeGrafter"/>
</dbReference>
<dbReference type="GO" id="GO:0000287">
    <property type="term" value="F:magnesium ion binding"/>
    <property type="evidence" value="ECO:0007669"/>
    <property type="project" value="UniProtKB-UniRule"/>
</dbReference>
<dbReference type="GO" id="GO:0030145">
    <property type="term" value="F:manganese ion binding"/>
    <property type="evidence" value="ECO:0007669"/>
    <property type="project" value="TreeGrafter"/>
</dbReference>
<dbReference type="GO" id="GO:0016094">
    <property type="term" value="P:polyprenol biosynthetic process"/>
    <property type="evidence" value="ECO:0007669"/>
    <property type="project" value="TreeGrafter"/>
</dbReference>
<dbReference type="CDD" id="cd00475">
    <property type="entry name" value="Cis_IPPS"/>
    <property type="match status" value="1"/>
</dbReference>
<dbReference type="FunFam" id="3.40.1180.10:FF:000001">
    <property type="entry name" value="(2E,6E)-farnesyl-diphosphate-specific ditrans,polycis-undecaprenyl-diphosphate synthase"/>
    <property type="match status" value="1"/>
</dbReference>
<dbReference type="Gene3D" id="3.40.1180.10">
    <property type="entry name" value="Decaprenyl diphosphate synthase-like"/>
    <property type="match status" value="1"/>
</dbReference>
<dbReference type="HAMAP" id="MF_01139">
    <property type="entry name" value="ISPT"/>
    <property type="match status" value="1"/>
</dbReference>
<dbReference type="InterPro" id="IPR001441">
    <property type="entry name" value="UPP_synth-like"/>
</dbReference>
<dbReference type="InterPro" id="IPR018520">
    <property type="entry name" value="UPP_synth-like_CS"/>
</dbReference>
<dbReference type="InterPro" id="IPR036424">
    <property type="entry name" value="UPP_synth-like_sf"/>
</dbReference>
<dbReference type="NCBIfam" id="NF011405">
    <property type="entry name" value="PRK14830.1"/>
    <property type="match status" value="1"/>
</dbReference>
<dbReference type="NCBIfam" id="TIGR00055">
    <property type="entry name" value="uppS"/>
    <property type="match status" value="1"/>
</dbReference>
<dbReference type="PANTHER" id="PTHR10291:SF0">
    <property type="entry name" value="DEHYDRODOLICHYL DIPHOSPHATE SYNTHASE 2"/>
    <property type="match status" value="1"/>
</dbReference>
<dbReference type="PANTHER" id="PTHR10291">
    <property type="entry name" value="DEHYDRODOLICHYL DIPHOSPHATE SYNTHASE FAMILY MEMBER"/>
    <property type="match status" value="1"/>
</dbReference>
<dbReference type="Pfam" id="PF01255">
    <property type="entry name" value="Prenyltransf"/>
    <property type="match status" value="1"/>
</dbReference>
<dbReference type="SUPFAM" id="SSF64005">
    <property type="entry name" value="Undecaprenyl diphosphate synthase"/>
    <property type="match status" value="1"/>
</dbReference>
<dbReference type="PROSITE" id="PS01066">
    <property type="entry name" value="UPP_SYNTHASE"/>
    <property type="match status" value="1"/>
</dbReference>
<accession>Q81WL2</accession>
<accession>Q6HUR3</accession>
<accession>Q6KNZ4</accession>
<sequence length="258" mass="30161">MMFKNFPFFKGKKDTSFDHLVEEVKKGYIPEHIAIIMDGNGRWAKRRAMPRIAGHHEGMQVVKKITKFASKLNVKVLTLYAFSTENWKRPKKEVDYLMQLPEEFLGTFLPELIEENVQVRVIGQQDRLPTHTRRAMEKAMEETKENTGLILNFALNYGSRDEIVSAVQHMMKDSEEGKVRVEDVSEEMLSSYLMTSSLPDPELLIRTSGELRISNFMLWQIAYSEFWFTDVYWPDFTEEHLLNAITDFQHRGRRFGGV</sequence>
<comment type="function">
    <text evidence="1">Catalyzes the condensation of isopentenyl diphosphate (IPP) with allylic pyrophosphates generating different type of terpenoids.</text>
</comment>
<comment type="cofactor">
    <cofactor evidence="1">
        <name>Mg(2+)</name>
        <dbReference type="ChEBI" id="CHEBI:18420"/>
    </cofactor>
    <text evidence="1">Binds 2 magnesium ions per subunit.</text>
</comment>
<comment type="subunit">
    <text evidence="1">Homodimer.</text>
</comment>
<comment type="similarity">
    <text evidence="1">Belongs to the UPP synthase family.</text>
</comment>
<feature type="chain" id="PRO_0000123566" description="Isoprenyl transferase">
    <location>
        <begin position="1"/>
        <end position="258"/>
    </location>
</feature>
<feature type="active site" evidence="1">
    <location>
        <position position="38"/>
    </location>
</feature>
<feature type="active site" description="Proton acceptor" evidence="1">
    <location>
        <position position="86"/>
    </location>
</feature>
<feature type="binding site" evidence="1">
    <location>
        <position position="38"/>
    </location>
    <ligand>
        <name>Mg(2+)</name>
        <dbReference type="ChEBI" id="CHEBI:18420"/>
    </ligand>
</feature>
<feature type="binding site" evidence="1">
    <location>
        <begin position="39"/>
        <end position="42"/>
    </location>
    <ligand>
        <name>substrate</name>
    </ligand>
</feature>
<feature type="binding site" evidence="1">
    <location>
        <position position="43"/>
    </location>
    <ligand>
        <name>substrate</name>
    </ligand>
</feature>
<feature type="binding site" evidence="1">
    <location>
        <position position="51"/>
    </location>
    <ligand>
        <name>substrate</name>
    </ligand>
</feature>
<feature type="binding site" evidence="1">
    <location>
        <position position="55"/>
    </location>
    <ligand>
        <name>substrate</name>
    </ligand>
</feature>
<feature type="binding site" evidence="1">
    <location>
        <begin position="83"/>
        <end position="85"/>
    </location>
    <ligand>
        <name>substrate</name>
    </ligand>
</feature>
<feature type="binding site" evidence="1">
    <location>
        <position position="87"/>
    </location>
    <ligand>
        <name>substrate</name>
    </ligand>
</feature>
<feature type="binding site" evidence="1">
    <location>
        <position position="89"/>
    </location>
    <ligand>
        <name>substrate</name>
    </ligand>
</feature>
<feature type="binding site" evidence="1">
    <location>
        <position position="206"/>
    </location>
    <ligand>
        <name>substrate</name>
    </ligand>
</feature>
<feature type="binding site" evidence="1">
    <location>
        <begin position="212"/>
        <end position="214"/>
    </location>
    <ligand>
        <name>substrate</name>
    </ligand>
</feature>
<feature type="binding site" evidence="1">
    <location>
        <position position="225"/>
    </location>
    <ligand>
        <name>Mg(2+)</name>
        <dbReference type="ChEBI" id="CHEBI:18420"/>
    </ligand>
</feature>
<evidence type="ECO:0000255" key="1">
    <source>
        <dbReference type="HAMAP-Rule" id="MF_01139"/>
    </source>
</evidence>
<keyword id="KW-0460">Magnesium</keyword>
<keyword id="KW-0479">Metal-binding</keyword>
<keyword id="KW-1185">Reference proteome</keyword>
<keyword id="KW-0808">Transferase</keyword>
<name>ISPT_BACAN</name>
<reference key="1">
    <citation type="journal article" date="2003" name="Nature">
        <title>The genome sequence of Bacillus anthracis Ames and comparison to closely related bacteria.</title>
        <authorList>
            <person name="Read T.D."/>
            <person name="Peterson S.N."/>
            <person name="Tourasse N.J."/>
            <person name="Baillie L.W."/>
            <person name="Paulsen I.T."/>
            <person name="Nelson K.E."/>
            <person name="Tettelin H."/>
            <person name="Fouts D.E."/>
            <person name="Eisen J.A."/>
            <person name="Gill S.R."/>
            <person name="Holtzapple E.K."/>
            <person name="Okstad O.A."/>
            <person name="Helgason E."/>
            <person name="Rilstone J."/>
            <person name="Wu M."/>
            <person name="Kolonay J.F."/>
            <person name="Beanan M.J."/>
            <person name="Dodson R.J."/>
            <person name="Brinkac L.M."/>
            <person name="Gwinn M.L."/>
            <person name="DeBoy R.T."/>
            <person name="Madpu R."/>
            <person name="Daugherty S.C."/>
            <person name="Durkin A.S."/>
            <person name="Haft D.H."/>
            <person name="Nelson W.C."/>
            <person name="Peterson J.D."/>
            <person name="Pop M."/>
            <person name="Khouri H.M."/>
            <person name="Radune D."/>
            <person name="Benton J.L."/>
            <person name="Mahamoud Y."/>
            <person name="Jiang L."/>
            <person name="Hance I.R."/>
            <person name="Weidman J.F."/>
            <person name="Berry K.J."/>
            <person name="Plaut R.D."/>
            <person name="Wolf A.M."/>
            <person name="Watkins K.L."/>
            <person name="Nierman W.C."/>
            <person name="Hazen A."/>
            <person name="Cline R.T."/>
            <person name="Redmond C."/>
            <person name="Thwaite J.E."/>
            <person name="White O."/>
            <person name="Salzberg S.L."/>
            <person name="Thomason B."/>
            <person name="Friedlander A.M."/>
            <person name="Koehler T.M."/>
            <person name="Hanna P.C."/>
            <person name="Kolstoe A.-B."/>
            <person name="Fraser C.M."/>
        </authorList>
    </citation>
    <scope>NUCLEOTIDE SEQUENCE [LARGE SCALE GENOMIC DNA]</scope>
    <source>
        <strain>Ames / isolate Porton</strain>
    </source>
</reference>
<reference key="2">
    <citation type="journal article" date="2009" name="J. Bacteriol.">
        <title>The complete genome sequence of Bacillus anthracis Ames 'Ancestor'.</title>
        <authorList>
            <person name="Ravel J."/>
            <person name="Jiang L."/>
            <person name="Stanley S.T."/>
            <person name="Wilson M.R."/>
            <person name="Decker R.S."/>
            <person name="Read T.D."/>
            <person name="Worsham P."/>
            <person name="Keim P.S."/>
            <person name="Salzberg S.L."/>
            <person name="Fraser-Liggett C.M."/>
            <person name="Rasko D.A."/>
        </authorList>
    </citation>
    <scope>NUCLEOTIDE SEQUENCE [LARGE SCALE GENOMIC DNA]</scope>
    <source>
        <strain>Ames ancestor</strain>
    </source>
</reference>
<reference key="3">
    <citation type="submission" date="2004-01" db="EMBL/GenBank/DDBJ databases">
        <title>Complete genome sequence of Bacillus anthracis Sterne.</title>
        <authorList>
            <person name="Brettin T.S."/>
            <person name="Bruce D."/>
            <person name="Challacombe J.F."/>
            <person name="Gilna P."/>
            <person name="Han C."/>
            <person name="Hill K."/>
            <person name="Hitchcock P."/>
            <person name="Jackson P."/>
            <person name="Keim P."/>
            <person name="Longmire J."/>
            <person name="Lucas S."/>
            <person name="Okinaka R."/>
            <person name="Richardson P."/>
            <person name="Rubin E."/>
            <person name="Tice H."/>
        </authorList>
    </citation>
    <scope>NUCLEOTIDE SEQUENCE [LARGE SCALE GENOMIC DNA]</scope>
    <source>
        <strain>Sterne</strain>
    </source>
</reference>
<gene>
    <name evidence="1" type="primary">uppS</name>
    <name type="ordered locus">BA_3961</name>
    <name type="ordered locus">GBAA_3961</name>
    <name type="ordered locus">BAS3674</name>
</gene>
<protein>
    <recommendedName>
        <fullName evidence="1">Isoprenyl transferase</fullName>
        <ecNumber evidence="1">2.5.1.-</ecNumber>
    </recommendedName>
</protein>